<dbReference type="EC" id="2.3.1.129" evidence="1"/>
<dbReference type="EMBL" id="AP008232">
    <property type="protein sequence ID" value="BAE75206.1"/>
    <property type="molecule type" value="Genomic_DNA"/>
</dbReference>
<dbReference type="RefSeq" id="WP_011411662.1">
    <property type="nucleotide sequence ID" value="NC_007712.1"/>
</dbReference>
<dbReference type="SMR" id="Q2NRL9"/>
<dbReference type="STRING" id="343509.SG1931"/>
<dbReference type="KEGG" id="sgl:SG1931"/>
<dbReference type="eggNOG" id="COG1043">
    <property type="taxonomic scope" value="Bacteria"/>
</dbReference>
<dbReference type="HOGENOM" id="CLU_061249_0_0_6"/>
<dbReference type="OrthoDB" id="9807278at2"/>
<dbReference type="BioCyc" id="SGLO343509:SGP1_RS17780-MONOMER"/>
<dbReference type="UniPathway" id="UPA00359">
    <property type="reaction ID" value="UER00477"/>
</dbReference>
<dbReference type="Proteomes" id="UP000001932">
    <property type="component" value="Chromosome"/>
</dbReference>
<dbReference type="GO" id="GO:0005737">
    <property type="term" value="C:cytoplasm"/>
    <property type="evidence" value="ECO:0007669"/>
    <property type="project" value="UniProtKB-SubCell"/>
</dbReference>
<dbReference type="GO" id="GO:0016020">
    <property type="term" value="C:membrane"/>
    <property type="evidence" value="ECO:0007669"/>
    <property type="project" value="GOC"/>
</dbReference>
<dbReference type="GO" id="GO:0008780">
    <property type="term" value="F:acyl-[acyl-carrier-protein]-UDP-N-acetylglucosamine O-acyltransferase activity"/>
    <property type="evidence" value="ECO:0007669"/>
    <property type="project" value="UniProtKB-UniRule"/>
</dbReference>
<dbReference type="GO" id="GO:0009245">
    <property type="term" value="P:lipid A biosynthetic process"/>
    <property type="evidence" value="ECO:0007669"/>
    <property type="project" value="UniProtKB-UniRule"/>
</dbReference>
<dbReference type="CDD" id="cd03351">
    <property type="entry name" value="LbH_UDP-GlcNAc_AT"/>
    <property type="match status" value="1"/>
</dbReference>
<dbReference type="FunFam" id="2.160.10.10:FF:000003">
    <property type="entry name" value="Acyl-[acyl-carrier-protein]--UDP-N-acetylglucosamine O-acyltransferase"/>
    <property type="match status" value="1"/>
</dbReference>
<dbReference type="Gene3D" id="2.160.10.10">
    <property type="entry name" value="Hexapeptide repeat proteins"/>
    <property type="match status" value="1"/>
</dbReference>
<dbReference type="Gene3D" id="1.20.1180.10">
    <property type="entry name" value="Udp N-acetylglucosamine O-acyltransferase, C-terminal domain"/>
    <property type="match status" value="1"/>
</dbReference>
<dbReference type="HAMAP" id="MF_00387">
    <property type="entry name" value="LpxA"/>
    <property type="match status" value="1"/>
</dbReference>
<dbReference type="InterPro" id="IPR029098">
    <property type="entry name" value="Acetyltransf_C"/>
</dbReference>
<dbReference type="InterPro" id="IPR037157">
    <property type="entry name" value="Acetyltransf_C_sf"/>
</dbReference>
<dbReference type="InterPro" id="IPR001451">
    <property type="entry name" value="Hexapep"/>
</dbReference>
<dbReference type="InterPro" id="IPR018357">
    <property type="entry name" value="Hexapep_transf_CS"/>
</dbReference>
<dbReference type="InterPro" id="IPR010137">
    <property type="entry name" value="Lipid_A_LpxA"/>
</dbReference>
<dbReference type="InterPro" id="IPR011004">
    <property type="entry name" value="Trimer_LpxA-like_sf"/>
</dbReference>
<dbReference type="NCBIfam" id="TIGR01852">
    <property type="entry name" value="lipid_A_lpxA"/>
    <property type="match status" value="1"/>
</dbReference>
<dbReference type="NCBIfam" id="NF003657">
    <property type="entry name" value="PRK05289.1"/>
    <property type="match status" value="1"/>
</dbReference>
<dbReference type="PANTHER" id="PTHR43480">
    <property type="entry name" value="ACYL-[ACYL-CARRIER-PROTEIN]--UDP-N-ACETYLGLUCOSAMINE O-ACYLTRANSFERASE"/>
    <property type="match status" value="1"/>
</dbReference>
<dbReference type="PANTHER" id="PTHR43480:SF1">
    <property type="entry name" value="ACYL-[ACYL-CARRIER-PROTEIN]--UDP-N-ACETYLGLUCOSAMINE O-ACYLTRANSFERASE, MITOCHONDRIAL-RELATED"/>
    <property type="match status" value="1"/>
</dbReference>
<dbReference type="Pfam" id="PF13720">
    <property type="entry name" value="Acetyltransf_11"/>
    <property type="match status" value="1"/>
</dbReference>
<dbReference type="Pfam" id="PF00132">
    <property type="entry name" value="Hexapep"/>
    <property type="match status" value="2"/>
</dbReference>
<dbReference type="PIRSF" id="PIRSF000456">
    <property type="entry name" value="UDP-GlcNAc_acltr"/>
    <property type="match status" value="1"/>
</dbReference>
<dbReference type="SUPFAM" id="SSF51161">
    <property type="entry name" value="Trimeric LpxA-like enzymes"/>
    <property type="match status" value="1"/>
</dbReference>
<dbReference type="PROSITE" id="PS00101">
    <property type="entry name" value="HEXAPEP_TRANSFERASES"/>
    <property type="match status" value="1"/>
</dbReference>
<name>LPXA_SODGM</name>
<gene>
    <name evidence="1" type="primary">lpxA</name>
    <name type="ordered locus">SG1931</name>
</gene>
<accession>Q2NRL9</accession>
<proteinExistence type="inferred from homology"/>
<keyword id="KW-0012">Acyltransferase</keyword>
<keyword id="KW-0963">Cytoplasm</keyword>
<keyword id="KW-0441">Lipid A biosynthesis</keyword>
<keyword id="KW-0444">Lipid biosynthesis</keyword>
<keyword id="KW-0443">Lipid metabolism</keyword>
<keyword id="KW-0677">Repeat</keyword>
<keyword id="KW-0808">Transferase</keyword>
<comment type="function">
    <text evidence="1">Involved in the biosynthesis of lipid A, a phosphorylated glycolipid that anchors the lipopolysaccharide to the outer membrane of the cell.</text>
</comment>
<comment type="catalytic activity">
    <reaction evidence="1">
        <text>a (3R)-hydroxyacyl-[ACP] + UDP-N-acetyl-alpha-D-glucosamine = a UDP-3-O-[(3R)-3-hydroxyacyl]-N-acetyl-alpha-D-glucosamine + holo-[ACP]</text>
        <dbReference type="Rhea" id="RHEA:67812"/>
        <dbReference type="Rhea" id="RHEA-COMP:9685"/>
        <dbReference type="Rhea" id="RHEA-COMP:9945"/>
        <dbReference type="ChEBI" id="CHEBI:57705"/>
        <dbReference type="ChEBI" id="CHEBI:64479"/>
        <dbReference type="ChEBI" id="CHEBI:78827"/>
        <dbReference type="ChEBI" id="CHEBI:173225"/>
        <dbReference type="EC" id="2.3.1.129"/>
    </reaction>
</comment>
<comment type="pathway">
    <text evidence="1">Glycolipid biosynthesis; lipid IV(A) biosynthesis; lipid IV(A) from (3R)-3-hydroxytetradecanoyl-[acyl-carrier-protein] and UDP-N-acetyl-alpha-D-glucosamine: step 1/6.</text>
</comment>
<comment type="subunit">
    <text evidence="1">Homotrimer.</text>
</comment>
<comment type="subcellular location">
    <subcellularLocation>
        <location evidence="1">Cytoplasm</location>
    </subcellularLocation>
</comment>
<comment type="similarity">
    <text evidence="1">Belongs to the transferase hexapeptide repeat family. LpxA subfamily.</text>
</comment>
<organism>
    <name type="scientific">Sodalis glossinidius (strain morsitans)</name>
    <dbReference type="NCBI Taxonomy" id="343509"/>
    <lineage>
        <taxon>Bacteria</taxon>
        <taxon>Pseudomonadati</taxon>
        <taxon>Pseudomonadota</taxon>
        <taxon>Gammaproteobacteria</taxon>
        <taxon>Enterobacterales</taxon>
        <taxon>Bruguierivoracaceae</taxon>
        <taxon>Sodalis</taxon>
    </lineage>
</organism>
<feature type="chain" id="PRO_0000302605" description="Acyl-[acyl-carrier-protein]--UDP-N-acetylglucosamine O-acyltransferase">
    <location>
        <begin position="1"/>
        <end position="262"/>
    </location>
</feature>
<sequence>MIDQSAFIHPSAIVEDGAIIHADVHVGPFCVIGPQVEIGARTVLESHVVVTGITRIGEDNQIYPFASLGDVNQDLKYAGEPTRVEIGHRNRIRESVTIHRGTIQGGEVTRVGSDNLLMVNAHVAHDCTVGSHCIMANNATLGGHVAVDDYAIIGGMTAVHQFCVIGAYVMVGGCSGVAQDVPPFVIAQGNHATPFGLNIEGLKRRGFDHAALHAIRAAYKIIYRSGKTLDEAKPELQALAQEHQVVNTFLDFLLRSQRGIIR</sequence>
<evidence type="ECO:0000255" key="1">
    <source>
        <dbReference type="HAMAP-Rule" id="MF_00387"/>
    </source>
</evidence>
<reference key="1">
    <citation type="journal article" date="2006" name="Genome Res.">
        <title>Massive genome erosion and functional adaptations provide insights into the symbiotic lifestyle of Sodalis glossinidius in the tsetse host.</title>
        <authorList>
            <person name="Toh H."/>
            <person name="Weiss B.L."/>
            <person name="Perkin S.A.H."/>
            <person name="Yamashita A."/>
            <person name="Oshima K."/>
            <person name="Hattori M."/>
            <person name="Aksoy S."/>
        </authorList>
    </citation>
    <scope>NUCLEOTIDE SEQUENCE [LARGE SCALE GENOMIC DNA]</scope>
    <source>
        <strain>morsitans</strain>
    </source>
</reference>
<protein>
    <recommendedName>
        <fullName evidence="1">Acyl-[acyl-carrier-protein]--UDP-N-acetylglucosamine O-acyltransferase</fullName>
        <shortName evidence="1">UDP-N-acetylglucosamine acyltransferase</shortName>
        <ecNumber evidence="1">2.3.1.129</ecNumber>
    </recommendedName>
</protein>